<dbReference type="EC" id="4.3.2.10" evidence="1"/>
<dbReference type="EMBL" id="CP000613">
    <property type="protein sequence ID" value="ACJ00661.1"/>
    <property type="molecule type" value="Genomic_DNA"/>
</dbReference>
<dbReference type="RefSeq" id="WP_012568439.1">
    <property type="nucleotide sequence ID" value="NC_011420.2"/>
</dbReference>
<dbReference type="SMR" id="B6IWI7"/>
<dbReference type="STRING" id="414684.RC1_3299"/>
<dbReference type="KEGG" id="rce:RC1_3299"/>
<dbReference type="eggNOG" id="COG0107">
    <property type="taxonomic scope" value="Bacteria"/>
</dbReference>
<dbReference type="HOGENOM" id="CLU_048577_4_0_5"/>
<dbReference type="OrthoDB" id="9781903at2"/>
<dbReference type="UniPathway" id="UPA00031">
    <property type="reaction ID" value="UER00010"/>
</dbReference>
<dbReference type="Proteomes" id="UP000001591">
    <property type="component" value="Chromosome"/>
</dbReference>
<dbReference type="GO" id="GO:0005737">
    <property type="term" value="C:cytoplasm"/>
    <property type="evidence" value="ECO:0007669"/>
    <property type="project" value="UniProtKB-SubCell"/>
</dbReference>
<dbReference type="GO" id="GO:0000107">
    <property type="term" value="F:imidazoleglycerol-phosphate synthase activity"/>
    <property type="evidence" value="ECO:0007669"/>
    <property type="project" value="UniProtKB-UniRule"/>
</dbReference>
<dbReference type="GO" id="GO:0016829">
    <property type="term" value="F:lyase activity"/>
    <property type="evidence" value="ECO:0007669"/>
    <property type="project" value="UniProtKB-KW"/>
</dbReference>
<dbReference type="GO" id="GO:0000105">
    <property type="term" value="P:L-histidine biosynthetic process"/>
    <property type="evidence" value="ECO:0007669"/>
    <property type="project" value="UniProtKB-UniRule"/>
</dbReference>
<dbReference type="CDD" id="cd04731">
    <property type="entry name" value="HisF"/>
    <property type="match status" value="1"/>
</dbReference>
<dbReference type="FunFam" id="3.20.20.70:FF:000006">
    <property type="entry name" value="Imidazole glycerol phosphate synthase subunit HisF"/>
    <property type="match status" value="1"/>
</dbReference>
<dbReference type="Gene3D" id="3.20.20.70">
    <property type="entry name" value="Aldolase class I"/>
    <property type="match status" value="1"/>
</dbReference>
<dbReference type="HAMAP" id="MF_01013">
    <property type="entry name" value="HisF"/>
    <property type="match status" value="1"/>
</dbReference>
<dbReference type="InterPro" id="IPR013785">
    <property type="entry name" value="Aldolase_TIM"/>
</dbReference>
<dbReference type="InterPro" id="IPR006062">
    <property type="entry name" value="His_biosynth"/>
</dbReference>
<dbReference type="InterPro" id="IPR004651">
    <property type="entry name" value="HisF"/>
</dbReference>
<dbReference type="InterPro" id="IPR050064">
    <property type="entry name" value="IGPS_HisA/HisF"/>
</dbReference>
<dbReference type="InterPro" id="IPR011060">
    <property type="entry name" value="RibuloseP-bd_barrel"/>
</dbReference>
<dbReference type="NCBIfam" id="TIGR00735">
    <property type="entry name" value="hisF"/>
    <property type="match status" value="1"/>
</dbReference>
<dbReference type="PANTHER" id="PTHR21235:SF2">
    <property type="entry name" value="IMIDAZOLE GLYCEROL PHOSPHATE SYNTHASE HISHF"/>
    <property type="match status" value="1"/>
</dbReference>
<dbReference type="PANTHER" id="PTHR21235">
    <property type="entry name" value="IMIDAZOLE GLYCEROL PHOSPHATE SYNTHASE SUBUNIT HISF/H IGP SYNTHASE SUBUNIT HISF/H"/>
    <property type="match status" value="1"/>
</dbReference>
<dbReference type="Pfam" id="PF00977">
    <property type="entry name" value="His_biosynth"/>
    <property type="match status" value="1"/>
</dbReference>
<dbReference type="SUPFAM" id="SSF51366">
    <property type="entry name" value="Ribulose-phoshate binding barrel"/>
    <property type="match status" value="1"/>
</dbReference>
<protein>
    <recommendedName>
        <fullName evidence="1">Imidazole glycerol phosphate synthase subunit HisF</fullName>
        <ecNumber evidence="1">4.3.2.10</ecNumber>
    </recommendedName>
    <alternativeName>
        <fullName evidence="1">IGP synthase cyclase subunit</fullName>
    </alternativeName>
    <alternativeName>
        <fullName evidence="1">IGP synthase subunit HisF</fullName>
    </alternativeName>
    <alternativeName>
        <fullName evidence="1">ImGP synthase subunit HisF</fullName>
        <shortName evidence="1">IGPS subunit HisF</shortName>
    </alternativeName>
</protein>
<keyword id="KW-0028">Amino-acid biosynthesis</keyword>
<keyword id="KW-0963">Cytoplasm</keyword>
<keyword id="KW-0368">Histidine biosynthesis</keyword>
<keyword id="KW-0456">Lyase</keyword>
<keyword id="KW-1185">Reference proteome</keyword>
<feature type="chain" id="PRO_1000190597" description="Imidazole glycerol phosphate synthase subunit HisF">
    <location>
        <begin position="1"/>
        <end position="258"/>
    </location>
</feature>
<feature type="active site" evidence="1">
    <location>
        <position position="11"/>
    </location>
</feature>
<feature type="active site" evidence="1">
    <location>
        <position position="130"/>
    </location>
</feature>
<organism>
    <name type="scientific">Rhodospirillum centenum (strain ATCC 51521 / SW)</name>
    <dbReference type="NCBI Taxonomy" id="414684"/>
    <lineage>
        <taxon>Bacteria</taxon>
        <taxon>Pseudomonadati</taxon>
        <taxon>Pseudomonadota</taxon>
        <taxon>Alphaproteobacteria</taxon>
        <taxon>Rhodospirillales</taxon>
        <taxon>Rhodospirillaceae</taxon>
        <taxon>Rhodospirillum</taxon>
    </lineage>
</organism>
<comment type="function">
    <text evidence="1">IGPS catalyzes the conversion of PRFAR and glutamine to IGP, AICAR and glutamate. The HisF subunit catalyzes the cyclization activity that produces IGP and AICAR from PRFAR using the ammonia provided by the HisH subunit.</text>
</comment>
<comment type="catalytic activity">
    <reaction evidence="1">
        <text>5-[(5-phospho-1-deoxy-D-ribulos-1-ylimino)methylamino]-1-(5-phospho-beta-D-ribosyl)imidazole-4-carboxamide + L-glutamine = D-erythro-1-(imidazol-4-yl)glycerol 3-phosphate + 5-amino-1-(5-phospho-beta-D-ribosyl)imidazole-4-carboxamide + L-glutamate + H(+)</text>
        <dbReference type="Rhea" id="RHEA:24793"/>
        <dbReference type="ChEBI" id="CHEBI:15378"/>
        <dbReference type="ChEBI" id="CHEBI:29985"/>
        <dbReference type="ChEBI" id="CHEBI:58278"/>
        <dbReference type="ChEBI" id="CHEBI:58359"/>
        <dbReference type="ChEBI" id="CHEBI:58475"/>
        <dbReference type="ChEBI" id="CHEBI:58525"/>
        <dbReference type="EC" id="4.3.2.10"/>
    </reaction>
</comment>
<comment type="pathway">
    <text evidence="1">Amino-acid biosynthesis; L-histidine biosynthesis; L-histidine from 5-phospho-alpha-D-ribose 1-diphosphate: step 5/9.</text>
</comment>
<comment type="subunit">
    <text evidence="1">Heterodimer of HisH and HisF.</text>
</comment>
<comment type="subcellular location">
    <subcellularLocation>
        <location evidence="1">Cytoplasm</location>
    </subcellularLocation>
</comment>
<comment type="similarity">
    <text evidence="1">Belongs to the HisA/HisF family.</text>
</comment>
<reference key="1">
    <citation type="submission" date="2007-03" db="EMBL/GenBank/DDBJ databases">
        <title>Genome sequence of Rhodospirillum centenum.</title>
        <authorList>
            <person name="Touchman J.W."/>
            <person name="Bauer C."/>
            <person name="Blankenship R.E."/>
        </authorList>
    </citation>
    <scope>NUCLEOTIDE SEQUENCE [LARGE SCALE GENOMIC DNA]</scope>
    <source>
        <strain>ATCC 51521 / SW</strain>
    </source>
</reference>
<gene>
    <name evidence="1" type="primary">hisF</name>
    <name type="ordered locus">RC1_3299</name>
</gene>
<evidence type="ECO:0000255" key="1">
    <source>
        <dbReference type="HAMAP-Rule" id="MF_01013"/>
    </source>
</evidence>
<proteinExistence type="inferred from homology"/>
<name>HIS6_RHOCS</name>
<sequence length="258" mass="27152">MLKARVIPCLDVKDGRVVKGVNFVDLVDAGDPVEQARLYDAAGADELTFLDITASSDNRETIYDVVRRTAEQVFMPLTVGGGVRTVEDIRRLLLAGADKVSINTAAVHRPDFVREGAEKFGSQCIVVAIDAKAVAPGPDGAPRWEVFTHGGRTPTGLDAVDWARRMAELGAGEILLTSMDRDGTKAGFDIGLTRAVADAVPVPVIASGGVGTLDHLVAGIRDGHATAVLAASIFHFGTFSVGQAKRHMAAAGIPMRLA</sequence>
<accession>B6IWI7</accession>